<protein>
    <recommendedName>
        <fullName evidence="1">dCTP deaminase</fullName>
        <ecNumber evidence="1">3.5.4.13</ecNumber>
    </recommendedName>
    <alternativeName>
        <fullName evidence="1">Deoxycytidine triphosphate deaminase</fullName>
    </alternativeName>
</protein>
<accession>B0UT66</accession>
<reference key="1">
    <citation type="submission" date="2008-02" db="EMBL/GenBank/DDBJ databases">
        <title>Complete sequence of Haemophilus somnus 2336.</title>
        <authorList>
            <consortium name="US DOE Joint Genome Institute"/>
            <person name="Siddaramappa S."/>
            <person name="Duncan A.J."/>
            <person name="Challacombe J.F."/>
            <person name="Rainey D."/>
            <person name="Gillaspy A.F."/>
            <person name="Carson M."/>
            <person name="Gipson J."/>
            <person name="Gipson M."/>
            <person name="Bruce D."/>
            <person name="Detter J.C."/>
            <person name="Han C.S."/>
            <person name="Land M."/>
            <person name="Tapia R."/>
            <person name="Thompson L.S."/>
            <person name="Orvis J."/>
            <person name="Zaitshik J."/>
            <person name="Barnes G."/>
            <person name="Brettin T.S."/>
            <person name="Dyer D.W."/>
            <person name="Inzana T.J."/>
        </authorList>
    </citation>
    <scope>NUCLEOTIDE SEQUENCE [LARGE SCALE GENOMIC DNA]</scope>
    <source>
        <strain>2336</strain>
    </source>
</reference>
<gene>
    <name evidence="1" type="primary">dcd</name>
    <name type="ordered locus">HSM_0985</name>
</gene>
<proteinExistence type="inferred from homology"/>
<keyword id="KW-0378">Hydrolase</keyword>
<keyword id="KW-0546">Nucleotide metabolism</keyword>
<keyword id="KW-0547">Nucleotide-binding</keyword>
<organism>
    <name type="scientific">Histophilus somni (strain 2336)</name>
    <name type="common">Haemophilus somnus</name>
    <dbReference type="NCBI Taxonomy" id="228400"/>
    <lineage>
        <taxon>Bacteria</taxon>
        <taxon>Pseudomonadati</taxon>
        <taxon>Pseudomonadota</taxon>
        <taxon>Gammaproteobacteria</taxon>
        <taxon>Pasteurellales</taxon>
        <taxon>Pasteurellaceae</taxon>
        <taxon>Histophilus</taxon>
    </lineage>
</organism>
<feature type="chain" id="PRO_1000076620" description="dCTP deaminase">
    <location>
        <begin position="1"/>
        <end position="194"/>
    </location>
</feature>
<feature type="active site" description="Proton donor/acceptor" evidence="1">
    <location>
        <position position="138"/>
    </location>
</feature>
<feature type="binding site" evidence="1">
    <location>
        <begin position="110"/>
        <end position="115"/>
    </location>
    <ligand>
        <name>dCTP</name>
        <dbReference type="ChEBI" id="CHEBI:61481"/>
    </ligand>
</feature>
<feature type="binding site" evidence="1">
    <location>
        <position position="128"/>
    </location>
    <ligand>
        <name>dCTP</name>
        <dbReference type="ChEBI" id="CHEBI:61481"/>
    </ligand>
</feature>
<feature type="binding site" evidence="1">
    <location>
        <begin position="136"/>
        <end position="138"/>
    </location>
    <ligand>
        <name>dCTP</name>
        <dbReference type="ChEBI" id="CHEBI:61481"/>
    </ligand>
</feature>
<feature type="binding site" evidence="1">
    <location>
        <position position="171"/>
    </location>
    <ligand>
        <name>dCTP</name>
        <dbReference type="ChEBI" id="CHEBI:61481"/>
    </ligand>
</feature>
<feature type="binding site" evidence="1">
    <location>
        <position position="178"/>
    </location>
    <ligand>
        <name>dCTP</name>
        <dbReference type="ChEBI" id="CHEBI:61481"/>
    </ligand>
</feature>
<feature type="binding site" evidence="1">
    <location>
        <position position="182"/>
    </location>
    <ligand>
        <name>dCTP</name>
        <dbReference type="ChEBI" id="CHEBI:61481"/>
    </ligand>
</feature>
<dbReference type="EC" id="3.5.4.13" evidence="1"/>
<dbReference type="EMBL" id="CP000947">
    <property type="protein sequence ID" value="ACA32671.1"/>
    <property type="molecule type" value="Genomic_DNA"/>
</dbReference>
<dbReference type="RefSeq" id="WP_011608801.1">
    <property type="nucleotide sequence ID" value="NC_010519.1"/>
</dbReference>
<dbReference type="SMR" id="B0UT66"/>
<dbReference type="STRING" id="228400.HSM_0985"/>
<dbReference type="GeneID" id="31487283"/>
<dbReference type="KEGG" id="hsm:HSM_0985"/>
<dbReference type="HOGENOM" id="CLU_087476_2_0_6"/>
<dbReference type="UniPathway" id="UPA00610">
    <property type="reaction ID" value="UER00665"/>
</dbReference>
<dbReference type="GO" id="GO:0008829">
    <property type="term" value="F:dCTP deaminase activity"/>
    <property type="evidence" value="ECO:0007669"/>
    <property type="project" value="UniProtKB-UniRule"/>
</dbReference>
<dbReference type="GO" id="GO:0000166">
    <property type="term" value="F:nucleotide binding"/>
    <property type="evidence" value="ECO:0007669"/>
    <property type="project" value="UniProtKB-KW"/>
</dbReference>
<dbReference type="GO" id="GO:0006226">
    <property type="term" value="P:dUMP biosynthetic process"/>
    <property type="evidence" value="ECO:0007669"/>
    <property type="project" value="UniProtKB-UniPathway"/>
</dbReference>
<dbReference type="GO" id="GO:0006229">
    <property type="term" value="P:dUTP biosynthetic process"/>
    <property type="evidence" value="ECO:0007669"/>
    <property type="project" value="UniProtKB-UniRule"/>
</dbReference>
<dbReference type="GO" id="GO:0015949">
    <property type="term" value="P:nucleobase-containing small molecule interconversion"/>
    <property type="evidence" value="ECO:0007669"/>
    <property type="project" value="TreeGrafter"/>
</dbReference>
<dbReference type="CDD" id="cd07557">
    <property type="entry name" value="trimeric_dUTPase"/>
    <property type="match status" value="1"/>
</dbReference>
<dbReference type="FunFam" id="2.70.40.10:FF:000003">
    <property type="entry name" value="dCTP deaminase"/>
    <property type="match status" value="1"/>
</dbReference>
<dbReference type="Gene3D" id="2.70.40.10">
    <property type="match status" value="1"/>
</dbReference>
<dbReference type="HAMAP" id="MF_00146">
    <property type="entry name" value="dCTP_deaminase"/>
    <property type="match status" value="1"/>
</dbReference>
<dbReference type="InterPro" id="IPR011962">
    <property type="entry name" value="dCTP_deaminase"/>
</dbReference>
<dbReference type="InterPro" id="IPR036157">
    <property type="entry name" value="dUTPase-like_sf"/>
</dbReference>
<dbReference type="InterPro" id="IPR033704">
    <property type="entry name" value="dUTPase_trimeric"/>
</dbReference>
<dbReference type="NCBIfam" id="TIGR02274">
    <property type="entry name" value="dCTP_deam"/>
    <property type="match status" value="1"/>
</dbReference>
<dbReference type="PANTHER" id="PTHR42680">
    <property type="entry name" value="DCTP DEAMINASE"/>
    <property type="match status" value="1"/>
</dbReference>
<dbReference type="PANTHER" id="PTHR42680:SF3">
    <property type="entry name" value="DCTP DEAMINASE"/>
    <property type="match status" value="1"/>
</dbReference>
<dbReference type="Pfam" id="PF22769">
    <property type="entry name" value="DCD"/>
    <property type="match status" value="1"/>
</dbReference>
<dbReference type="SUPFAM" id="SSF51283">
    <property type="entry name" value="dUTPase-like"/>
    <property type="match status" value="1"/>
</dbReference>
<evidence type="ECO:0000255" key="1">
    <source>
        <dbReference type="HAMAP-Rule" id="MF_00146"/>
    </source>
</evidence>
<comment type="function">
    <text evidence="1">Catalyzes the deamination of dCTP to dUTP.</text>
</comment>
<comment type="catalytic activity">
    <reaction evidence="1">
        <text>dCTP + H2O + H(+) = dUTP + NH4(+)</text>
        <dbReference type="Rhea" id="RHEA:22680"/>
        <dbReference type="ChEBI" id="CHEBI:15377"/>
        <dbReference type="ChEBI" id="CHEBI:15378"/>
        <dbReference type="ChEBI" id="CHEBI:28938"/>
        <dbReference type="ChEBI" id="CHEBI:61481"/>
        <dbReference type="ChEBI" id="CHEBI:61555"/>
        <dbReference type="EC" id="3.5.4.13"/>
    </reaction>
</comment>
<comment type="pathway">
    <text evidence="1">Pyrimidine metabolism; dUMP biosynthesis; dUMP from dCTP (dUTP route): step 1/2.</text>
</comment>
<comment type="subunit">
    <text evidence="1">Homotrimer.</text>
</comment>
<comment type="similarity">
    <text evidence="1">Belongs to the dCTP deaminase family.</text>
</comment>
<name>DCD_HISS2</name>
<sequence length="194" mass="21383">MRLCDTDIERYLDQGIISLTPRPSNEKINGATIDVRLGNSFRVFREHTAPFIDLSGPKEEVTAQLDAVMSDEIIIGENEAFFLHPGELALATTLEAVKLPANIIGWLDGRSSLARLGLMVHVTAHRIDPGWEGKIVLEFFNSGKLPLALRPNMVIGALSFEVLSGTAARPYTSRKDAKYKHQQSAVASRISEDK</sequence>